<dbReference type="EMBL" id="AE015925">
    <property type="protein sequence ID" value="AAP05201.1"/>
    <property type="molecule type" value="Genomic_DNA"/>
</dbReference>
<dbReference type="RefSeq" id="WP_011006417.1">
    <property type="nucleotide sequence ID" value="NC_003361.3"/>
</dbReference>
<dbReference type="SMR" id="Q823F7"/>
<dbReference type="STRING" id="227941.CCA_00455"/>
<dbReference type="KEGG" id="cca:CCA_00455"/>
<dbReference type="eggNOG" id="COG0227">
    <property type="taxonomic scope" value="Bacteria"/>
</dbReference>
<dbReference type="HOGENOM" id="CLU_064548_3_2_0"/>
<dbReference type="OrthoDB" id="9805609at2"/>
<dbReference type="Proteomes" id="UP000002193">
    <property type="component" value="Chromosome"/>
</dbReference>
<dbReference type="GO" id="GO:1990904">
    <property type="term" value="C:ribonucleoprotein complex"/>
    <property type="evidence" value="ECO:0007669"/>
    <property type="project" value="UniProtKB-KW"/>
</dbReference>
<dbReference type="GO" id="GO:0005840">
    <property type="term" value="C:ribosome"/>
    <property type="evidence" value="ECO:0007669"/>
    <property type="project" value="UniProtKB-KW"/>
</dbReference>
<dbReference type="GO" id="GO:0003735">
    <property type="term" value="F:structural constituent of ribosome"/>
    <property type="evidence" value="ECO:0007669"/>
    <property type="project" value="InterPro"/>
</dbReference>
<dbReference type="GO" id="GO:0006412">
    <property type="term" value="P:translation"/>
    <property type="evidence" value="ECO:0007669"/>
    <property type="project" value="UniProtKB-UniRule"/>
</dbReference>
<dbReference type="Gene3D" id="2.30.170.40">
    <property type="entry name" value="Ribosomal protein L28/L24"/>
    <property type="match status" value="1"/>
</dbReference>
<dbReference type="HAMAP" id="MF_00373">
    <property type="entry name" value="Ribosomal_bL28"/>
    <property type="match status" value="1"/>
</dbReference>
<dbReference type="InterPro" id="IPR026569">
    <property type="entry name" value="Ribosomal_bL28"/>
</dbReference>
<dbReference type="InterPro" id="IPR034704">
    <property type="entry name" value="Ribosomal_bL28/bL31-like_sf"/>
</dbReference>
<dbReference type="InterPro" id="IPR001383">
    <property type="entry name" value="Ribosomal_bL28_bact-type"/>
</dbReference>
<dbReference type="InterPro" id="IPR037147">
    <property type="entry name" value="Ribosomal_bL28_sf"/>
</dbReference>
<dbReference type="NCBIfam" id="TIGR00009">
    <property type="entry name" value="L28"/>
    <property type="match status" value="1"/>
</dbReference>
<dbReference type="PANTHER" id="PTHR13528">
    <property type="entry name" value="39S RIBOSOMAL PROTEIN L28, MITOCHONDRIAL"/>
    <property type="match status" value="1"/>
</dbReference>
<dbReference type="PANTHER" id="PTHR13528:SF2">
    <property type="entry name" value="LARGE RIBOSOMAL SUBUNIT PROTEIN BL28M"/>
    <property type="match status" value="1"/>
</dbReference>
<dbReference type="Pfam" id="PF00830">
    <property type="entry name" value="Ribosomal_L28"/>
    <property type="match status" value="1"/>
</dbReference>
<dbReference type="SUPFAM" id="SSF143800">
    <property type="entry name" value="L28p-like"/>
    <property type="match status" value="1"/>
</dbReference>
<proteinExistence type="inferred from homology"/>
<protein>
    <recommendedName>
        <fullName evidence="1">Large ribosomal subunit protein bL28</fullName>
    </recommendedName>
    <alternativeName>
        <fullName evidence="2">50S ribosomal protein L28</fullName>
    </alternativeName>
</protein>
<accession>Q823F7</accession>
<feature type="chain" id="PRO_0000178453" description="Large ribosomal subunit protein bL28">
    <location>
        <begin position="1"/>
        <end position="89"/>
    </location>
</feature>
<organism>
    <name type="scientific">Chlamydia caviae (strain ATCC VR-813 / DSM 19441 / 03DC25 / GPIC)</name>
    <name type="common">Chlamydophila caviae</name>
    <dbReference type="NCBI Taxonomy" id="227941"/>
    <lineage>
        <taxon>Bacteria</taxon>
        <taxon>Pseudomonadati</taxon>
        <taxon>Chlamydiota</taxon>
        <taxon>Chlamydiia</taxon>
        <taxon>Chlamydiales</taxon>
        <taxon>Chlamydiaceae</taxon>
        <taxon>Chlamydia/Chlamydophila group</taxon>
        <taxon>Chlamydia</taxon>
    </lineage>
</organism>
<comment type="similarity">
    <text evidence="1">Belongs to the bacterial ribosomal protein bL28 family.</text>
</comment>
<name>RL28_CHLCV</name>
<evidence type="ECO:0000255" key="1">
    <source>
        <dbReference type="HAMAP-Rule" id="MF_00373"/>
    </source>
</evidence>
<evidence type="ECO:0000305" key="2"/>
<gene>
    <name evidence="1" type="primary">rpmB</name>
    <name type="ordered locus">CCA_00455</name>
</gene>
<keyword id="KW-0687">Ribonucleoprotein</keyword>
<keyword id="KW-0689">Ribosomal protein</keyword>
<reference key="1">
    <citation type="journal article" date="2003" name="Nucleic Acids Res.">
        <title>Genome sequence of Chlamydophila caviae (Chlamydia psittaci GPIC): examining the role of niche-specific genes in the evolution of the Chlamydiaceae.</title>
        <authorList>
            <person name="Read T.D."/>
            <person name="Myers G.S.A."/>
            <person name="Brunham R.C."/>
            <person name="Nelson W.C."/>
            <person name="Paulsen I.T."/>
            <person name="Heidelberg J.F."/>
            <person name="Holtzapple E.K."/>
            <person name="Khouri H.M."/>
            <person name="Federova N.B."/>
            <person name="Carty H.A."/>
            <person name="Umayam L.A."/>
            <person name="Haft D.H."/>
            <person name="Peterson J.D."/>
            <person name="Beanan M.J."/>
            <person name="White O."/>
            <person name="Salzberg S.L."/>
            <person name="Hsia R.-C."/>
            <person name="McClarty G."/>
            <person name="Rank R.G."/>
            <person name="Bavoil P.M."/>
            <person name="Fraser C.M."/>
        </authorList>
    </citation>
    <scope>NUCLEOTIDE SEQUENCE [LARGE SCALE GENOMIC DNA]</scope>
    <source>
        <strain>ATCC VR-813 / DSM 19441 / 03DC25 / GPIC</strain>
    </source>
</reference>
<sequence>MSRKCPLTGKRPRRGNSYTIRGIAKKKKGIGLKVTGKTPRRFFPNMITKRLWSTEENKFLKLKISTSALRLIDKLGLEKVIARAKSKGL</sequence>